<sequence>MRSQYCGDVNKSHVGQEVTLVGWVNRSRDLGGVVFLDLRDREGIVQVVYDPDLPEVFDVASTLRSEFCVQVTGLVRARPDSQVNQDMRTGGIEILGKGLTILNSSAPLPINMDKNQHNTEEQRLKYRYLDLRRPEMADRIVFRSKVTSAVRRFLDDSGFLDIETPILTKATPEGARDYLVPSRTYKGQFFALPQSPQLFKQLLMMSGFDRYYQIVKCFRDEDLRADRQPEFTQIDIETSFMSSEQVMAKTEEMVRGLFNDLLNVDLGEFPKMTFAEAMRRFGSDKPDLRNPLELIDIADIVKEVEFAVFNGPANDPEGRVAVLSIPGGAKLSRKQLDEYAKYVTIYGAKGLAWMKVNDLDQGMEGIQSPVLKFLSEDVVKALLDRTGAQTGDLILFGADKANIVAEAMGALRLKAGEDFDLLQGEWKPLWVVDFPMFERTSDGGLHAMHHPFTAPTGISPEQLEADPTAAISDAYDMVLNGCELGGGSVRIHNSEMQSAVFRILGIEEEEANEKFGFLLEALRYGTPPHAGLAFGLDRIIMLMTGASSIRDVMAFPKTTTAACPLTNAPGFANPAQLIELGIEVIENQESKEEQA</sequence>
<name>SYD_SHEWM</name>
<protein>
    <recommendedName>
        <fullName evidence="1">Aspartate--tRNA ligase</fullName>
        <ecNumber evidence="1">6.1.1.12</ecNumber>
    </recommendedName>
    <alternativeName>
        <fullName evidence="1">Aspartyl-tRNA synthetase</fullName>
        <shortName evidence="1">AspRS</shortName>
    </alternativeName>
</protein>
<comment type="function">
    <text evidence="1">Catalyzes the attachment of L-aspartate to tRNA(Asp) in a two-step reaction: L-aspartate is first activated by ATP to form Asp-AMP and then transferred to the acceptor end of tRNA(Asp).</text>
</comment>
<comment type="catalytic activity">
    <reaction evidence="1">
        <text>tRNA(Asp) + L-aspartate + ATP = L-aspartyl-tRNA(Asp) + AMP + diphosphate</text>
        <dbReference type="Rhea" id="RHEA:19649"/>
        <dbReference type="Rhea" id="RHEA-COMP:9660"/>
        <dbReference type="Rhea" id="RHEA-COMP:9678"/>
        <dbReference type="ChEBI" id="CHEBI:29991"/>
        <dbReference type="ChEBI" id="CHEBI:30616"/>
        <dbReference type="ChEBI" id="CHEBI:33019"/>
        <dbReference type="ChEBI" id="CHEBI:78442"/>
        <dbReference type="ChEBI" id="CHEBI:78516"/>
        <dbReference type="ChEBI" id="CHEBI:456215"/>
        <dbReference type="EC" id="6.1.1.12"/>
    </reaction>
</comment>
<comment type="subunit">
    <text evidence="1">Homodimer.</text>
</comment>
<comment type="subcellular location">
    <subcellularLocation>
        <location evidence="1">Cytoplasm</location>
    </subcellularLocation>
</comment>
<comment type="similarity">
    <text evidence="1">Belongs to the class-II aminoacyl-tRNA synthetase family. Type 1 subfamily.</text>
</comment>
<accession>B1KHG7</accession>
<organism>
    <name type="scientific">Shewanella woodyi (strain ATCC 51908 / MS32)</name>
    <dbReference type="NCBI Taxonomy" id="392500"/>
    <lineage>
        <taxon>Bacteria</taxon>
        <taxon>Pseudomonadati</taxon>
        <taxon>Pseudomonadota</taxon>
        <taxon>Gammaproteobacteria</taxon>
        <taxon>Alteromonadales</taxon>
        <taxon>Shewanellaceae</taxon>
        <taxon>Shewanella</taxon>
    </lineage>
</organism>
<dbReference type="EC" id="6.1.1.12" evidence="1"/>
<dbReference type="EMBL" id="CP000961">
    <property type="protein sequence ID" value="ACA86852.1"/>
    <property type="molecule type" value="Genomic_DNA"/>
</dbReference>
<dbReference type="RefSeq" id="WP_012325192.1">
    <property type="nucleotide sequence ID" value="NC_010506.1"/>
</dbReference>
<dbReference type="SMR" id="B1KHG7"/>
<dbReference type="STRING" id="392500.Swoo_2575"/>
<dbReference type="KEGG" id="swd:Swoo_2575"/>
<dbReference type="eggNOG" id="COG0173">
    <property type="taxonomic scope" value="Bacteria"/>
</dbReference>
<dbReference type="HOGENOM" id="CLU_014330_3_2_6"/>
<dbReference type="Proteomes" id="UP000002168">
    <property type="component" value="Chromosome"/>
</dbReference>
<dbReference type="GO" id="GO:0005737">
    <property type="term" value="C:cytoplasm"/>
    <property type="evidence" value="ECO:0007669"/>
    <property type="project" value="UniProtKB-SubCell"/>
</dbReference>
<dbReference type="GO" id="GO:0004815">
    <property type="term" value="F:aspartate-tRNA ligase activity"/>
    <property type="evidence" value="ECO:0007669"/>
    <property type="project" value="UniProtKB-UniRule"/>
</dbReference>
<dbReference type="GO" id="GO:0005524">
    <property type="term" value="F:ATP binding"/>
    <property type="evidence" value="ECO:0007669"/>
    <property type="project" value="UniProtKB-UniRule"/>
</dbReference>
<dbReference type="GO" id="GO:0003676">
    <property type="term" value="F:nucleic acid binding"/>
    <property type="evidence" value="ECO:0007669"/>
    <property type="project" value="InterPro"/>
</dbReference>
<dbReference type="GO" id="GO:0006422">
    <property type="term" value="P:aspartyl-tRNA aminoacylation"/>
    <property type="evidence" value="ECO:0007669"/>
    <property type="project" value="UniProtKB-UniRule"/>
</dbReference>
<dbReference type="CDD" id="cd00777">
    <property type="entry name" value="AspRS_core"/>
    <property type="match status" value="1"/>
</dbReference>
<dbReference type="CDD" id="cd04317">
    <property type="entry name" value="EcAspRS_like_N"/>
    <property type="match status" value="1"/>
</dbReference>
<dbReference type="FunFam" id="2.40.50.140:FF:000080">
    <property type="entry name" value="Aspartate--tRNA ligase"/>
    <property type="match status" value="1"/>
</dbReference>
<dbReference type="Gene3D" id="3.30.930.10">
    <property type="entry name" value="Bira Bifunctional Protein, Domain 2"/>
    <property type="match status" value="1"/>
</dbReference>
<dbReference type="Gene3D" id="3.30.1360.30">
    <property type="entry name" value="GAD-like domain"/>
    <property type="match status" value="1"/>
</dbReference>
<dbReference type="Gene3D" id="2.40.50.140">
    <property type="entry name" value="Nucleic acid-binding proteins"/>
    <property type="match status" value="1"/>
</dbReference>
<dbReference type="HAMAP" id="MF_00044">
    <property type="entry name" value="Asp_tRNA_synth_type1"/>
    <property type="match status" value="1"/>
</dbReference>
<dbReference type="InterPro" id="IPR004364">
    <property type="entry name" value="Aa-tRNA-synt_II"/>
</dbReference>
<dbReference type="InterPro" id="IPR006195">
    <property type="entry name" value="aa-tRNA-synth_II"/>
</dbReference>
<dbReference type="InterPro" id="IPR045864">
    <property type="entry name" value="aa-tRNA-synth_II/BPL/LPL"/>
</dbReference>
<dbReference type="InterPro" id="IPR004524">
    <property type="entry name" value="Asp-tRNA-ligase_1"/>
</dbReference>
<dbReference type="InterPro" id="IPR047089">
    <property type="entry name" value="Asp-tRNA-ligase_1_N"/>
</dbReference>
<dbReference type="InterPro" id="IPR002312">
    <property type="entry name" value="Asp/Asn-tRNA-synth_IIb"/>
</dbReference>
<dbReference type="InterPro" id="IPR047090">
    <property type="entry name" value="AspRS_core"/>
</dbReference>
<dbReference type="InterPro" id="IPR004115">
    <property type="entry name" value="GAD-like_sf"/>
</dbReference>
<dbReference type="InterPro" id="IPR029351">
    <property type="entry name" value="GAD_dom"/>
</dbReference>
<dbReference type="InterPro" id="IPR012340">
    <property type="entry name" value="NA-bd_OB-fold"/>
</dbReference>
<dbReference type="InterPro" id="IPR004365">
    <property type="entry name" value="NA-bd_OB_tRNA"/>
</dbReference>
<dbReference type="NCBIfam" id="TIGR00459">
    <property type="entry name" value="aspS_bact"/>
    <property type="match status" value="1"/>
</dbReference>
<dbReference type="NCBIfam" id="NF001750">
    <property type="entry name" value="PRK00476.1"/>
    <property type="match status" value="1"/>
</dbReference>
<dbReference type="PANTHER" id="PTHR22594:SF5">
    <property type="entry name" value="ASPARTATE--TRNA LIGASE, MITOCHONDRIAL"/>
    <property type="match status" value="1"/>
</dbReference>
<dbReference type="PANTHER" id="PTHR22594">
    <property type="entry name" value="ASPARTYL/LYSYL-TRNA SYNTHETASE"/>
    <property type="match status" value="1"/>
</dbReference>
<dbReference type="Pfam" id="PF02938">
    <property type="entry name" value="GAD"/>
    <property type="match status" value="1"/>
</dbReference>
<dbReference type="Pfam" id="PF00152">
    <property type="entry name" value="tRNA-synt_2"/>
    <property type="match status" value="1"/>
</dbReference>
<dbReference type="Pfam" id="PF01336">
    <property type="entry name" value="tRNA_anti-codon"/>
    <property type="match status" value="1"/>
</dbReference>
<dbReference type="PRINTS" id="PR01042">
    <property type="entry name" value="TRNASYNTHASP"/>
</dbReference>
<dbReference type="SUPFAM" id="SSF55681">
    <property type="entry name" value="Class II aaRS and biotin synthetases"/>
    <property type="match status" value="1"/>
</dbReference>
<dbReference type="SUPFAM" id="SSF55261">
    <property type="entry name" value="GAD domain-like"/>
    <property type="match status" value="1"/>
</dbReference>
<dbReference type="SUPFAM" id="SSF50249">
    <property type="entry name" value="Nucleic acid-binding proteins"/>
    <property type="match status" value="1"/>
</dbReference>
<dbReference type="PROSITE" id="PS50862">
    <property type="entry name" value="AA_TRNA_LIGASE_II"/>
    <property type="match status" value="1"/>
</dbReference>
<reference key="1">
    <citation type="submission" date="2008-02" db="EMBL/GenBank/DDBJ databases">
        <title>Complete sequence of Shewanella woodyi ATCC 51908.</title>
        <authorList>
            <consortium name="US DOE Joint Genome Institute"/>
            <person name="Copeland A."/>
            <person name="Lucas S."/>
            <person name="Lapidus A."/>
            <person name="Glavina del Rio T."/>
            <person name="Dalin E."/>
            <person name="Tice H."/>
            <person name="Bruce D."/>
            <person name="Goodwin L."/>
            <person name="Pitluck S."/>
            <person name="Sims D."/>
            <person name="Brettin T."/>
            <person name="Detter J.C."/>
            <person name="Han C."/>
            <person name="Kuske C.R."/>
            <person name="Schmutz J."/>
            <person name="Larimer F."/>
            <person name="Land M."/>
            <person name="Hauser L."/>
            <person name="Kyrpides N."/>
            <person name="Lykidis A."/>
            <person name="Zhao J.-S."/>
            <person name="Richardson P."/>
        </authorList>
    </citation>
    <scope>NUCLEOTIDE SEQUENCE [LARGE SCALE GENOMIC DNA]</scope>
    <source>
        <strain>ATCC 51908 / MS32</strain>
    </source>
</reference>
<feature type="chain" id="PRO_1000091043" description="Aspartate--tRNA ligase">
    <location>
        <begin position="1"/>
        <end position="595"/>
    </location>
</feature>
<feature type="region of interest" description="Aspartate" evidence="1">
    <location>
        <begin position="197"/>
        <end position="200"/>
    </location>
</feature>
<feature type="binding site" evidence="1">
    <location>
        <position position="173"/>
    </location>
    <ligand>
        <name>L-aspartate</name>
        <dbReference type="ChEBI" id="CHEBI:29991"/>
    </ligand>
</feature>
<feature type="binding site" evidence="1">
    <location>
        <begin position="219"/>
        <end position="221"/>
    </location>
    <ligand>
        <name>ATP</name>
        <dbReference type="ChEBI" id="CHEBI:30616"/>
    </ligand>
</feature>
<feature type="binding site" evidence="1">
    <location>
        <position position="219"/>
    </location>
    <ligand>
        <name>L-aspartate</name>
        <dbReference type="ChEBI" id="CHEBI:29991"/>
    </ligand>
</feature>
<feature type="binding site" evidence="1">
    <location>
        <position position="228"/>
    </location>
    <ligand>
        <name>ATP</name>
        <dbReference type="ChEBI" id="CHEBI:30616"/>
    </ligand>
</feature>
<feature type="binding site" evidence="1">
    <location>
        <position position="449"/>
    </location>
    <ligand>
        <name>L-aspartate</name>
        <dbReference type="ChEBI" id="CHEBI:29991"/>
    </ligand>
</feature>
<feature type="binding site" evidence="1">
    <location>
        <position position="483"/>
    </location>
    <ligand>
        <name>ATP</name>
        <dbReference type="ChEBI" id="CHEBI:30616"/>
    </ligand>
</feature>
<feature type="binding site" evidence="1">
    <location>
        <position position="490"/>
    </location>
    <ligand>
        <name>L-aspartate</name>
        <dbReference type="ChEBI" id="CHEBI:29991"/>
    </ligand>
</feature>
<feature type="binding site" evidence="1">
    <location>
        <begin position="535"/>
        <end position="538"/>
    </location>
    <ligand>
        <name>ATP</name>
        <dbReference type="ChEBI" id="CHEBI:30616"/>
    </ligand>
</feature>
<keyword id="KW-0030">Aminoacyl-tRNA synthetase</keyword>
<keyword id="KW-0067">ATP-binding</keyword>
<keyword id="KW-0963">Cytoplasm</keyword>
<keyword id="KW-0436">Ligase</keyword>
<keyword id="KW-0547">Nucleotide-binding</keyword>
<keyword id="KW-0648">Protein biosynthesis</keyword>
<keyword id="KW-1185">Reference proteome</keyword>
<gene>
    <name evidence="1" type="primary">aspS</name>
    <name type="ordered locus">Swoo_2575</name>
</gene>
<proteinExistence type="inferred from homology"/>
<evidence type="ECO:0000255" key="1">
    <source>
        <dbReference type="HAMAP-Rule" id="MF_00044"/>
    </source>
</evidence>